<accession>A9WLY4</accession>
<sequence length="493" mass="54561">MTLRFYDTATAEVRDFAPLVEGKASLYYCGATVQSEPHIGHLRSALVFDQLTRWLQFRGFQTTVVRNVTDIDDKILAKAAEAGEEWWARAYKYEQQFNAAYDKLGITRPDYEPRATGNISEMHSLIQDLIDRGHAYPAPDGSGDVYFDVRSWGKYGSLTHQNIDDMQAAADADPRGKKDARDFALWKGRKPEEPTTASWPSPWGAGRPGWHLECSAMVGKYLGDAFDIHGGGLDLRFPHHENEMAQSQAAGRPFANFWMHNGLVAYQGEKMSKSIGNVIGPGELFAQASPRVVRYYLGQAHYRSVLDYSPESLEEAAAALARIDGFLVNAGANVQRVEVEDSGHMYLPPAAKQGFGWFAYAPLSDTPAAFVEAMDDDLNVPKALAVLHETVRAGNSAIASSDLVELQKKFEAVLAMLDVLGLSSIATDQAADNGSTHALETLVQTRLQERQQARTEKNWARSDEIRDELAEAGIKIEDSSNGATWSIERKQQR</sequence>
<feature type="chain" id="PRO_1000074626" description="Cysteine--tRNA ligase">
    <location>
        <begin position="1"/>
        <end position="493"/>
    </location>
</feature>
<feature type="short sequence motif" description="'HIGH' region">
    <location>
        <begin position="31"/>
        <end position="41"/>
    </location>
</feature>
<feature type="short sequence motif" description="'KMSKS' region">
    <location>
        <begin position="270"/>
        <end position="274"/>
    </location>
</feature>
<feature type="binding site" evidence="1">
    <location>
        <position position="29"/>
    </location>
    <ligand>
        <name>Zn(2+)</name>
        <dbReference type="ChEBI" id="CHEBI:29105"/>
    </ligand>
</feature>
<feature type="binding site" evidence="1">
    <location>
        <position position="214"/>
    </location>
    <ligand>
        <name>Zn(2+)</name>
        <dbReference type="ChEBI" id="CHEBI:29105"/>
    </ligand>
</feature>
<feature type="binding site" evidence="1">
    <location>
        <position position="239"/>
    </location>
    <ligand>
        <name>Zn(2+)</name>
        <dbReference type="ChEBI" id="CHEBI:29105"/>
    </ligand>
</feature>
<feature type="binding site" evidence="1">
    <location>
        <position position="243"/>
    </location>
    <ligand>
        <name>Zn(2+)</name>
        <dbReference type="ChEBI" id="CHEBI:29105"/>
    </ligand>
</feature>
<feature type="binding site" evidence="1">
    <location>
        <position position="273"/>
    </location>
    <ligand>
        <name>ATP</name>
        <dbReference type="ChEBI" id="CHEBI:30616"/>
    </ligand>
</feature>
<evidence type="ECO:0000255" key="1">
    <source>
        <dbReference type="HAMAP-Rule" id="MF_00041"/>
    </source>
</evidence>
<dbReference type="EC" id="6.1.1.16" evidence="1"/>
<dbReference type="EMBL" id="CP000910">
    <property type="protein sequence ID" value="ABY22165.1"/>
    <property type="molecule type" value="Genomic_DNA"/>
</dbReference>
<dbReference type="RefSeq" id="WP_012243872.1">
    <property type="nucleotide sequence ID" value="NC_010168.1"/>
</dbReference>
<dbReference type="SMR" id="A9WLY4"/>
<dbReference type="STRING" id="288705.RSal33209_0411"/>
<dbReference type="KEGG" id="rsa:RSal33209_0411"/>
<dbReference type="eggNOG" id="COG0215">
    <property type="taxonomic scope" value="Bacteria"/>
</dbReference>
<dbReference type="HOGENOM" id="CLU_013528_0_1_11"/>
<dbReference type="Proteomes" id="UP000002007">
    <property type="component" value="Chromosome"/>
</dbReference>
<dbReference type="GO" id="GO:0005829">
    <property type="term" value="C:cytosol"/>
    <property type="evidence" value="ECO:0007669"/>
    <property type="project" value="TreeGrafter"/>
</dbReference>
<dbReference type="GO" id="GO:0005524">
    <property type="term" value="F:ATP binding"/>
    <property type="evidence" value="ECO:0007669"/>
    <property type="project" value="UniProtKB-UniRule"/>
</dbReference>
<dbReference type="GO" id="GO:0004817">
    <property type="term" value="F:cysteine-tRNA ligase activity"/>
    <property type="evidence" value="ECO:0007669"/>
    <property type="project" value="UniProtKB-UniRule"/>
</dbReference>
<dbReference type="GO" id="GO:0008270">
    <property type="term" value="F:zinc ion binding"/>
    <property type="evidence" value="ECO:0007669"/>
    <property type="project" value="UniProtKB-UniRule"/>
</dbReference>
<dbReference type="GO" id="GO:0006423">
    <property type="term" value="P:cysteinyl-tRNA aminoacylation"/>
    <property type="evidence" value="ECO:0007669"/>
    <property type="project" value="UniProtKB-UniRule"/>
</dbReference>
<dbReference type="CDD" id="cd00672">
    <property type="entry name" value="CysRS_core"/>
    <property type="match status" value="1"/>
</dbReference>
<dbReference type="FunFam" id="3.40.50.620:FF:000068">
    <property type="entry name" value="Cysteine--tRNA ligase"/>
    <property type="match status" value="1"/>
</dbReference>
<dbReference type="Gene3D" id="1.20.120.1910">
    <property type="entry name" value="Cysteine-tRNA ligase, C-terminal anti-codon recognition domain"/>
    <property type="match status" value="1"/>
</dbReference>
<dbReference type="Gene3D" id="3.40.50.620">
    <property type="entry name" value="HUPs"/>
    <property type="match status" value="1"/>
</dbReference>
<dbReference type="HAMAP" id="MF_00041">
    <property type="entry name" value="Cys_tRNA_synth"/>
    <property type="match status" value="1"/>
</dbReference>
<dbReference type="InterPro" id="IPR015803">
    <property type="entry name" value="Cys-tRNA-ligase"/>
</dbReference>
<dbReference type="InterPro" id="IPR015273">
    <property type="entry name" value="Cys-tRNA-synt_Ia_DALR"/>
</dbReference>
<dbReference type="InterPro" id="IPR024909">
    <property type="entry name" value="Cys-tRNA/MSH_ligase"/>
</dbReference>
<dbReference type="InterPro" id="IPR056411">
    <property type="entry name" value="CysS_C"/>
</dbReference>
<dbReference type="InterPro" id="IPR014729">
    <property type="entry name" value="Rossmann-like_a/b/a_fold"/>
</dbReference>
<dbReference type="InterPro" id="IPR032678">
    <property type="entry name" value="tRNA-synt_1_cat_dom"/>
</dbReference>
<dbReference type="InterPro" id="IPR009080">
    <property type="entry name" value="tRNAsynth_Ia_anticodon-bd"/>
</dbReference>
<dbReference type="NCBIfam" id="TIGR00435">
    <property type="entry name" value="cysS"/>
    <property type="match status" value="1"/>
</dbReference>
<dbReference type="PANTHER" id="PTHR10890:SF30">
    <property type="entry name" value="CYSTEINE--TRNA LIGASE"/>
    <property type="match status" value="1"/>
</dbReference>
<dbReference type="PANTHER" id="PTHR10890">
    <property type="entry name" value="CYSTEINYL-TRNA SYNTHETASE"/>
    <property type="match status" value="1"/>
</dbReference>
<dbReference type="Pfam" id="PF23493">
    <property type="entry name" value="CysS_C"/>
    <property type="match status" value="1"/>
</dbReference>
<dbReference type="Pfam" id="PF09190">
    <property type="entry name" value="DALR_2"/>
    <property type="match status" value="1"/>
</dbReference>
<dbReference type="Pfam" id="PF01406">
    <property type="entry name" value="tRNA-synt_1e"/>
    <property type="match status" value="1"/>
</dbReference>
<dbReference type="PRINTS" id="PR00983">
    <property type="entry name" value="TRNASYNTHCYS"/>
</dbReference>
<dbReference type="SMART" id="SM00840">
    <property type="entry name" value="DALR_2"/>
    <property type="match status" value="1"/>
</dbReference>
<dbReference type="SUPFAM" id="SSF47323">
    <property type="entry name" value="Anticodon-binding domain of a subclass of class I aminoacyl-tRNA synthetases"/>
    <property type="match status" value="1"/>
</dbReference>
<dbReference type="SUPFAM" id="SSF52374">
    <property type="entry name" value="Nucleotidylyl transferase"/>
    <property type="match status" value="1"/>
</dbReference>
<organism>
    <name type="scientific">Renibacterium salmoninarum (strain ATCC 33209 / DSM 20767 / JCM 11484 / NBRC 15589 / NCIMB 2235)</name>
    <dbReference type="NCBI Taxonomy" id="288705"/>
    <lineage>
        <taxon>Bacteria</taxon>
        <taxon>Bacillati</taxon>
        <taxon>Actinomycetota</taxon>
        <taxon>Actinomycetes</taxon>
        <taxon>Micrococcales</taxon>
        <taxon>Micrococcaceae</taxon>
        <taxon>Renibacterium</taxon>
    </lineage>
</organism>
<proteinExistence type="inferred from homology"/>
<gene>
    <name evidence="1" type="primary">cysS</name>
    <name type="ordered locus">RSal33209_0411</name>
</gene>
<keyword id="KW-0030">Aminoacyl-tRNA synthetase</keyword>
<keyword id="KW-0067">ATP-binding</keyword>
<keyword id="KW-0963">Cytoplasm</keyword>
<keyword id="KW-0436">Ligase</keyword>
<keyword id="KW-0479">Metal-binding</keyword>
<keyword id="KW-0547">Nucleotide-binding</keyword>
<keyword id="KW-0648">Protein biosynthesis</keyword>
<keyword id="KW-1185">Reference proteome</keyword>
<keyword id="KW-0862">Zinc</keyword>
<name>SYC_RENSM</name>
<protein>
    <recommendedName>
        <fullName evidence="1">Cysteine--tRNA ligase</fullName>
        <ecNumber evidence="1">6.1.1.16</ecNumber>
    </recommendedName>
    <alternativeName>
        <fullName evidence="1">Cysteinyl-tRNA synthetase</fullName>
        <shortName evidence="1">CysRS</shortName>
    </alternativeName>
</protein>
<comment type="catalytic activity">
    <reaction evidence="1">
        <text>tRNA(Cys) + L-cysteine + ATP = L-cysteinyl-tRNA(Cys) + AMP + diphosphate</text>
        <dbReference type="Rhea" id="RHEA:17773"/>
        <dbReference type="Rhea" id="RHEA-COMP:9661"/>
        <dbReference type="Rhea" id="RHEA-COMP:9679"/>
        <dbReference type="ChEBI" id="CHEBI:30616"/>
        <dbReference type="ChEBI" id="CHEBI:33019"/>
        <dbReference type="ChEBI" id="CHEBI:35235"/>
        <dbReference type="ChEBI" id="CHEBI:78442"/>
        <dbReference type="ChEBI" id="CHEBI:78517"/>
        <dbReference type="ChEBI" id="CHEBI:456215"/>
        <dbReference type="EC" id="6.1.1.16"/>
    </reaction>
</comment>
<comment type="cofactor">
    <cofactor evidence="1">
        <name>Zn(2+)</name>
        <dbReference type="ChEBI" id="CHEBI:29105"/>
    </cofactor>
    <text evidence="1">Binds 1 zinc ion per subunit.</text>
</comment>
<comment type="subunit">
    <text evidence="1">Monomer.</text>
</comment>
<comment type="subcellular location">
    <subcellularLocation>
        <location evidence="1">Cytoplasm</location>
    </subcellularLocation>
</comment>
<comment type="similarity">
    <text evidence="1">Belongs to the class-I aminoacyl-tRNA synthetase family.</text>
</comment>
<reference key="1">
    <citation type="journal article" date="2008" name="J. Bacteriol.">
        <title>Genome sequence of the fish pathogen Renibacterium salmoninarum suggests reductive evolution away from an environmental Arthrobacter ancestor.</title>
        <authorList>
            <person name="Wiens G.D."/>
            <person name="Rockey D.D."/>
            <person name="Wu Z."/>
            <person name="Chang J."/>
            <person name="Levy R."/>
            <person name="Crane S."/>
            <person name="Chen D.S."/>
            <person name="Capri G.R."/>
            <person name="Burnett J.R."/>
            <person name="Sudheesh P.S."/>
            <person name="Schipma M.J."/>
            <person name="Burd H."/>
            <person name="Bhattacharyya A."/>
            <person name="Rhodes L.D."/>
            <person name="Kaul R."/>
            <person name="Strom M.S."/>
        </authorList>
    </citation>
    <scope>NUCLEOTIDE SEQUENCE [LARGE SCALE GENOMIC DNA]</scope>
    <source>
        <strain>ATCC 33209 / DSM 20767 / JCM 11484 / NBRC 15589 / NCIMB 2235</strain>
    </source>
</reference>